<sequence length="1598" mass="174929">MADCPYARCIQERRHIRRELLRWTKNMVFVVGLERVAEELMGRRRWKQYQDTLYSGTRSSESLTAQAHHRLYPAFSSSCDPVPGNLEQIGSRPLHPPASSTSLPATITTTTTTTTTTTATAAATATTTATGLIKQETLQRHHHLQNHHHHLQSTAVQDHHRPYQQQQQQQQRQQQRQEERRLRPDEIKVEVGEDEFANGGAARDESKAGSTDASTPATVTTTGATTTLPAASATGTGPATPSAVVATSNATAAMTTGTTTIPTRRLRKRRQNDGEGADDRDDDEENEEEEDGRGQSEAEKRLKLDEDADGAVSPLRREKDRGSREYPTSNATDTDGTKERTEEVALDRTPVTQGLLRVKKEEELQEAPSCGGGPTILTTPGLDSDGIRLPCREVEAAATARNVVAPFLIGSRRTSPPPEDWKPLDKCYFCLDGKLPHDDQPPLSPQSDSSSSSRSAESPMSVQVDPMAASVVAAALTGTYPTLLPQWCLPPREAPLVGVQPHQDSATPADQPLDLSAKPKNSQDNNISLLEQQKIPLRMTAGIDPKSIFNSGYRPKPRMSGPVAAVAAAAVAAAGVGGVPVVGAGGGRRAYTEEELQAALRDIQSGKLGTRRAAVIYGIPRSTLRNKVYKLAMERERDASLSSTHSHPHEPGAPATTITTITTTTTTTTTTTTTTTTPNTTQNASATTPPPQVDEVDDKELSGAEEEKEVEKALLKPLLSLEDLVRFSTLEGSGGDSLRTLLQRGQETGAEWPGLEHANIGPYIQKMIAAAAPFKGMETQDYRIPEVMRRLMSEDKRLSKSVNGDQSQPPHQQLHHHQSTHPQAQAQAQPQQQQQQQQQQPQQQQQQQQQQQQQQRGPMTNDDFNPNIEEEASDSAQGRAILKIPSYKPASTPGCSSKNGEPTSAAFAQGFATAASSPGLLERASPAFSGTSSPTNSLVGKTVAVNFRDVIAKSISVKFQEGQTVSGGGMGGCQPGGVVQSQQPIMTDPSPFKRGRYTPPQPANAQQGQAQAQAKPQSQEANKPKPATGGKGTRPKRGKYRNYDRDSLVEAVRAVQRGEMSVHRAGSYYGVPHSTLEYKVKERHLMRPRKRDQKQSDDKTKETSTVTAAAAATNIRPGTADNKPQLKPQKPFTSPGGIPGPNGIKMPSFMEGMPHLPFTPFNFWNPPPFMPSPFMAGAPNVPTILPEQYFATSRIRGLQEQQRNAAMVQQQQQQQQQQQQQQQQQQQQQQQQQHQAREREGVGAGIAETSAGTSNSRGAAQMSKVPRDVSEGIYDGSGANGSFLDNLIRSSLETGIPRDQRAMTEARNQQQQASSQQQIPESMRSKALIDQLCRNSRRTPVPRLAQDSSEDESYRGPSASGGRPVPERPERVPTVDLSPSPSDRGRNDDGSDRLTSPPTPLSISRAGSRDEDSTRDSTKLDRSSREREVHNGGQQEDRDRKTLTSAPQQPQQQQQQQQQQQQQQQQLNHYPDLHNLYAVPTDKKSACDSKLIVDHSSQKTQQQQPQQQQQQQQQQQPQQQSQQPQQQQPQPQQQQQQQQQQQPQQQQKEYGAVSGLVVQLQRGYNSGNNRSGEQANSQQQQQQQSGEPVIGMEDSVEQ</sequence>
<keyword id="KW-0010">Activator</keyword>
<keyword id="KW-0238">DNA-binding</keyword>
<keyword id="KW-0539">Nucleus</keyword>
<keyword id="KW-0597">Phosphoprotein</keyword>
<keyword id="KW-1185">Reference proteome</keyword>
<keyword id="KW-0677">Repeat</keyword>
<keyword id="KW-0804">Transcription</keyword>
<keyword id="KW-0805">Transcription regulation</keyword>
<organism>
    <name type="scientific">Apis mellifera</name>
    <name type="common">Honeybee</name>
    <dbReference type="NCBI Taxonomy" id="7460"/>
    <lineage>
        <taxon>Eukaryota</taxon>
        <taxon>Metazoa</taxon>
        <taxon>Ecdysozoa</taxon>
        <taxon>Arthropoda</taxon>
        <taxon>Hexapoda</taxon>
        <taxon>Insecta</taxon>
        <taxon>Pterygota</taxon>
        <taxon>Neoptera</taxon>
        <taxon>Endopterygota</taxon>
        <taxon>Hymenoptera</taxon>
        <taxon>Apocrita</taxon>
        <taxon>Aculeata</taxon>
        <taxon>Apoidea</taxon>
        <taxon>Anthophila</taxon>
        <taxon>Apidae</taxon>
        <taxon>Apis</taxon>
    </lineage>
</organism>
<accession>Q95YM8</accession>
<evidence type="ECO:0000255" key="1"/>
<evidence type="ECO:0000255" key="2">
    <source>
        <dbReference type="PROSITE-ProRule" id="PRU00320"/>
    </source>
</evidence>
<evidence type="ECO:0000256" key="3">
    <source>
        <dbReference type="SAM" id="MobiDB-lite"/>
    </source>
</evidence>
<evidence type="ECO:0000269" key="4">
    <source>
    </source>
</evidence>
<evidence type="ECO:0000269" key="5">
    <source>
    </source>
</evidence>
<evidence type="ECO:0000269" key="6">
    <source>
    </source>
</evidence>
<evidence type="ECO:0000305" key="7"/>
<evidence type="ECO:0000312" key="8">
    <source>
        <dbReference type="EMBL" id="BAB64310.1"/>
    </source>
</evidence>
<reference evidence="7 8" key="1">
    <citation type="journal article" date="2001" name="Insect Mol. Biol.">
        <title>Identification of a novel gene, Mblk-1, that encodes a putative transcription factor expressed preferentially in the large-type Kenyon cells of the honeybee brain.</title>
        <authorList>
            <person name="Takeuchi H."/>
            <person name="Kage E."/>
            <person name="Sawata M."/>
            <person name="Kamikouchi A."/>
            <person name="Ohashi K."/>
            <person name="Ohara M."/>
            <person name="Fujiyuki T."/>
            <person name="Kunieda T."/>
            <person name="Sekimizu K."/>
            <person name="Natori S."/>
            <person name="Kubo T."/>
        </authorList>
    </citation>
    <scope>NUCLEOTIDE SEQUENCE [MRNA]</scope>
    <scope>TISSUE SPECIFICITY</scope>
    <source>
        <tissue evidence="5">Mushroom body</tissue>
    </source>
</reference>
<reference evidence="7" key="2">
    <citation type="journal article" date="2002" name="Biochem. Biophys. Res. Commun.">
        <title>DNA-binding properties of Mblk-1, a putative transcription factor from the honeybee.</title>
        <authorList>
            <person name="Park J.-M."/>
            <person name="Kunieda T."/>
            <person name="Takeuchi H."/>
            <person name="Kubo T."/>
        </authorList>
    </citation>
    <scope>FUNCTION</scope>
</reference>
<reference evidence="7" key="3">
    <citation type="journal article" date="2003" name="J. Biol. Chem.">
        <title>The activity of Mblk-1, a mushroom body-selective transcription factor from the honeybee, is modulated by the ras/MAPK pathway.</title>
        <authorList>
            <person name="Park J.-M."/>
            <person name="Kunieda T."/>
            <person name="Kubo T."/>
        </authorList>
    </citation>
    <scope>FUNCTION</scope>
    <scope>PHOSPHORYLATION AT SER-444</scope>
    <scope>MUTAGENESIS OF SER-444</scope>
</reference>
<gene>
    <name type="primary">Mblk-1</name>
</gene>
<comment type="function">
    <text evidence="4 6">Transcriptional activator which binds to the consensus sequence 5'-CCCTATCGATCGATCTCTACCT-3'. May play a role in higher-order sensory processing.</text>
</comment>
<comment type="subunit">
    <text evidence="4 7">Homodimer.</text>
</comment>
<comment type="subcellular location">
    <subcellularLocation>
        <location evidence="1">Nucleus</location>
    </subcellularLocation>
</comment>
<comment type="tissue specificity">
    <text evidence="5">Large-type Kenyon cells of mushroom body.</text>
</comment>
<comment type="domain">
    <text evidence="6">The second H-T-H motif is necessary for transcriptional activation.</text>
</comment>
<proteinExistence type="evidence at protein level"/>
<name>MBLK1_APIME</name>
<feature type="chain" id="PRO_0000238916" description="Mushroom body large-type Kenyon cell-specific protein 1">
    <location>
        <begin position="1"/>
        <end position="1598"/>
    </location>
</feature>
<feature type="domain" description="HTH psq-type 1" evidence="2">
    <location>
        <begin position="582"/>
        <end position="634"/>
    </location>
</feature>
<feature type="domain" description="HTH psq-type 2" evidence="2">
    <location>
        <begin position="1034"/>
        <end position="1086"/>
    </location>
</feature>
<feature type="DNA-binding region" description="H-T-H motif" evidence="2">
    <location>
        <begin position="610"/>
        <end position="630"/>
    </location>
</feature>
<feature type="DNA-binding region" description="H-T-H motif" evidence="2">
    <location>
        <begin position="1062"/>
        <end position="1082"/>
    </location>
</feature>
<feature type="region of interest" description="Disordered" evidence="3">
    <location>
        <begin position="83"/>
        <end position="105"/>
    </location>
</feature>
<feature type="region of interest" description="Disordered" evidence="3">
    <location>
        <begin position="140"/>
        <end position="387"/>
    </location>
</feature>
<feature type="region of interest" description="Disordered" evidence="3">
    <location>
        <begin position="436"/>
        <end position="462"/>
    </location>
</feature>
<feature type="region of interest" description="Disordered" evidence="3">
    <location>
        <begin position="495"/>
        <end position="525"/>
    </location>
</feature>
<feature type="region of interest" description="Disordered" evidence="3">
    <location>
        <begin position="636"/>
        <end position="705"/>
    </location>
</feature>
<feature type="region of interest" description="Disordered" evidence="3">
    <location>
        <begin position="797"/>
        <end position="877"/>
    </location>
</feature>
<feature type="region of interest" description="Disordered" evidence="3">
    <location>
        <begin position="962"/>
        <end position="1045"/>
    </location>
</feature>
<feature type="region of interest" description="Disordered" evidence="3">
    <location>
        <begin position="1082"/>
        <end position="1145"/>
    </location>
</feature>
<feature type="region of interest" description="Disordered" evidence="3">
    <location>
        <begin position="1248"/>
        <end position="1283"/>
    </location>
</feature>
<feature type="region of interest" description="Disordered" evidence="3">
    <location>
        <begin position="1301"/>
        <end position="1598"/>
    </location>
</feature>
<feature type="compositionally biased region" description="Basic residues" evidence="3">
    <location>
        <begin position="140"/>
        <end position="151"/>
    </location>
</feature>
<feature type="compositionally biased region" description="Low complexity" evidence="3">
    <location>
        <begin position="164"/>
        <end position="174"/>
    </location>
</feature>
<feature type="compositionally biased region" description="Basic and acidic residues" evidence="3">
    <location>
        <begin position="175"/>
        <end position="191"/>
    </location>
</feature>
<feature type="compositionally biased region" description="Low complexity" evidence="3">
    <location>
        <begin position="210"/>
        <end position="263"/>
    </location>
</feature>
<feature type="compositionally biased region" description="Acidic residues" evidence="3">
    <location>
        <begin position="275"/>
        <end position="291"/>
    </location>
</feature>
<feature type="compositionally biased region" description="Basic and acidic residues" evidence="3">
    <location>
        <begin position="292"/>
        <end position="305"/>
    </location>
</feature>
<feature type="compositionally biased region" description="Basic and acidic residues" evidence="3">
    <location>
        <begin position="315"/>
        <end position="324"/>
    </location>
</feature>
<feature type="compositionally biased region" description="Basic and acidic residues" evidence="3">
    <location>
        <begin position="335"/>
        <end position="346"/>
    </location>
</feature>
<feature type="compositionally biased region" description="Low complexity" evidence="3">
    <location>
        <begin position="445"/>
        <end position="461"/>
    </location>
</feature>
<feature type="compositionally biased region" description="Low complexity" evidence="3">
    <location>
        <begin position="653"/>
        <end position="687"/>
    </location>
</feature>
<feature type="compositionally biased region" description="Acidic residues" evidence="3">
    <location>
        <begin position="694"/>
        <end position="705"/>
    </location>
</feature>
<feature type="compositionally biased region" description="Low complexity" evidence="3">
    <location>
        <begin position="820"/>
        <end position="855"/>
    </location>
</feature>
<feature type="compositionally biased region" description="Gly residues" evidence="3">
    <location>
        <begin position="965"/>
        <end position="975"/>
    </location>
</feature>
<feature type="compositionally biased region" description="Low complexity" evidence="3">
    <location>
        <begin position="1003"/>
        <end position="1021"/>
    </location>
</feature>
<feature type="compositionally biased region" description="Basic and acidic residues" evidence="3">
    <location>
        <begin position="1093"/>
        <end position="1102"/>
    </location>
</feature>
<feature type="compositionally biased region" description="Low complexity" evidence="3">
    <location>
        <begin position="1103"/>
        <end position="1120"/>
    </location>
</feature>
<feature type="compositionally biased region" description="Low complexity" evidence="3">
    <location>
        <begin position="1309"/>
        <end position="1318"/>
    </location>
</feature>
<feature type="compositionally biased region" description="Basic and acidic residues" evidence="3">
    <location>
        <begin position="1383"/>
        <end position="1392"/>
    </location>
</feature>
<feature type="compositionally biased region" description="Basic and acidic residues" evidence="3">
    <location>
        <begin position="1407"/>
        <end position="1442"/>
    </location>
</feature>
<feature type="compositionally biased region" description="Low complexity" evidence="3">
    <location>
        <begin position="1447"/>
        <end position="1466"/>
    </location>
</feature>
<feature type="compositionally biased region" description="Basic and acidic residues" evidence="3">
    <location>
        <begin position="1481"/>
        <end position="1497"/>
    </location>
</feature>
<feature type="compositionally biased region" description="Low complexity" evidence="3">
    <location>
        <begin position="1501"/>
        <end position="1547"/>
    </location>
</feature>
<feature type="compositionally biased region" description="Polar residues" evidence="3">
    <location>
        <begin position="1562"/>
        <end position="1577"/>
    </location>
</feature>
<feature type="modified residue" description="Phosphoserine; by MAPK" evidence="6">
    <location>
        <position position="444"/>
    </location>
</feature>
<feature type="mutagenesis site" description="Loss of phosphorylation." evidence="6">
    <original>S</original>
    <variation>A</variation>
    <location>
        <position position="444"/>
    </location>
</feature>
<protein>
    <recommendedName>
        <fullName>Mushroom body large-type Kenyon cell-specific protein 1</fullName>
    </recommendedName>
</protein>
<dbReference type="EMBL" id="AB047034">
    <property type="protein sequence ID" value="BAB64310.1"/>
    <property type="molecule type" value="mRNA"/>
</dbReference>
<dbReference type="RefSeq" id="NP_001011629.1">
    <property type="nucleotide sequence ID" value="NM_001011629.1"/>
</dbReference>
<dbReference type="SMR" id="Q95YM8"/>
<dbReference type="STRING" id="7460.Q95YM8"/>
<dbReference type="iPTMnet" id="Q95YM8"/>
<dbReference type="PaxDb" id="7460-GB50048-PA"/>
<dbReference type="EnsemblMetazoa" id="NM_001011629">
    <property type="protein sequence ID" value="NP_001011629"/>
    <property type="gene ID" value="GeneID_408521"/>
</dbReference>
<dbReference type="GeneID" id="408521"/>
<dbReference type="KEGG" id="ame:408521"/>
<dbReference type="CTD" id="44936"/>
<dbReference type="eggNOG" id="KOG4565">
    <property type="taxonomic scope" value="Eukaryota"/>
</dbReference>
<dbReference type="InParanoid" id="Q95YM8"/>
<dbReference type="OrthoDB" id="10028342at2759"/>
<dbReference type="PhylomeDB" id="Q95YM8"/>
<dbReference type="Proteomes" id="UP000005203">
    <property type="component" value="Linkage group LG15"/>
</dbReference>
<dbReference type="GO" id="GO:0005634">
    <property type="term" value="C:nucleus"/>
    <property type="evidence" value="ECO:0000305"/>
    <property type="project" value="UniProtKB"/>
</dbReference>
<dbReference type="GO" id="GO:0043565">
    <property type="term" value="F:sequence-specific DNA binding"/>
    <property type="evidence" value="ECO:0000314"/>
    <property type="project" value="UniProtKB"/>
</dbReference>
<dbReference type="GO" id="GO:0007613">
    <property type="term" value="P:memory"/>
    <property type="evidence" value="ECO:0000303"/>
    <property type="project" value="UniProtKB"/>
</dbReference>
<dbReference type="GO" id="GO:0045893">
    <property type="term" value="P:positive regulation of DNA-templated transcription"/>
    <property type="evidence" value="ECO:0000314"/>
    <property type="project" value="UniProtKB"/>
</dbReference>
<dbReference type="GO" id="GO:0006357">
    <property type="term" value="P:regulation of transcription by RNA polymerase II"/>
    <property type="evidence" value="ECO:0007669"/>
    <property type="project" value="TreeGrafter"/>
</dbReference>
<dbReference type="FunFam" id="1.10.10.60:FF:000019">
    <property type="entry name" value="Ligand-dependent corepressor isoform 1"/>
    <property type="match status" value="1"/>
</dbReference>
<dbReference type="Gene3D" id="1.10.10.60">
    <property type="entry name" value="Homeodomain-like"/>
    <property type="match status" value="2"/>
</dbReference>
<dbReference type="InterPro" id="IPR009057">
    <property type="entry name" value="Homeodomain-like_sf"/>
</dbReference>
<dbReference type="InterPro" id="IPR007889">
    <property type="entry name" value="HTH_Psq"/>
</dbReference>
<dbReference type="PANTHER" id="PTHR21545:SF13">
    <property type="entry name" value="ECDYSONE-INDUCED PROTEIN 93F, ISOFORM C"/>
    <property type="match status" value="1"/>
</dbReference>
<dbReference type="PANTHER" id="PTHR21545">
    <property type="entry name" value="TRANSCRIPTION FACTOR MLR1/2"/>
    <property type="match status" value="1"/>
</dbReference>
<dbReference type="Pfam" id="PF05225">
    <property type="entry name" value="HTH_psq"/>
    <property type="match status" value="2"/>
</dbReference>
<dbReference type="SUPFAM" id="SSF46689">
    <property type="entry name" value="Homeodomain-like"/>
    <property type="match status" value="2"/>
</dbReference>
<dbReference type="PROSITE" id="PS50960">
    <property type="entry name" value="HTH_PSQ"/>
    <property type="match status" value="2"/>
</dbReference>